<accession>B1IWE4</accession>
<feature type="chain" id="PRO_0000350164" description="Dual-specificity RNA methyltransferase RlmN">
    <location>
        <begin position="1"/>
        <end position="384"/>
    </location>
</feature>
<feature type="domain" description="Radical SAM core" evidence="2">
    <location>
        <begin position="111"/>
        <end position="350"/>
    </location>
</feature>
<feature type="active site" description="Proton acceptor" evidence="1">
    <location>
        <position position="105"/>
    </location>
</feature>
<feature type="active site" description="S-methylcysteine intermediate" evidence="1">
    <location>
        <position position="355"/>
    </location>
</feature>
<feature type="binding site" evidence="1">
    <location>
        <position position="125"/>
    </location>
    <ligand>
        <name>[4Fe-4S] cluster</name>
        <dbReference type="ChEBI" id="CHEBI:49883"/>
        <note>4Fe-4S-S-AdoMet</note>
    </ligand>
</feature>
<feature type="binding site" evidence="1">
    <location>
        <position position="129"/>
    </location>
    <ligand>
        <name>[4Fe-4S] cluster</name>
        <dbReference type="ChEBI" id="CHEBI:49883"/>
        <note>4Fe-4S-S-AdoMet</note>
    </ligand>
</feature>
<feature type="binding site" evidence="1">
    <location>
        <position position="132"/>
    </location>
    <ligand>
        <name>[4Fe-4S] cluster</name>
        <dbReference type="ChEBI" id="CHEBI:49883"/>
        <note>4Fe-4S-S-AdoMet</note>
    </ligand>
</feature>
<feature type="binding site" evidence="1">
    <location>
        <begin position="179"/>
        <end position="180"/>
    </location>
    <ligand>
        <name>S-adenosyl-L-methionine</name>
        <dbReference type="ChEBI" id="CHEBI:59789"/>
    </ligand>
</feature>
<feature type="binding site" evidence="1">
    <location>
        <position position="211"/>
    </location>
    <ligand>
        <name>S-adenosyl-L-methionine</name>
        <dbReference type="ChEBI" id="CHEBI:59789"/>
    </ligand>
</feature>
<feature type="binding site" evidence="1">
    <location>
        <begin position="233"/>
        <end position="235"/>
    </location>
    <ligand>
        <name>S-adenosyl-L-methionine</name>
        <dbReference type="ChEBI" id="CHEBI:59789"/>
    </ligand>
</feature>
<feature type="binding site" evidence="1">
    <location>
        <position position="312"/>
    </location>
    <ligand>
        <name>S-adenosyl-L-methionine</name>
        <dbReference type="ChEBI" id="CHEBI:59789"/>
    </ligand>
</feature>
<feature type="disulfide bond" description="(transient)" evidence="1">
    <location>
        <begin position="118"/>
        <end position="355"/>
    </location>
</feature>
<proteinExistence type="inferred from homology"/>
<comment type="function">
    <text evidence="1">Specifically methylates position 2 of adenine 2503 in 23S rRNA and position 2 of adenine 37 in tRNAs. m2A2503 modification seems to play a crucial role in the proofreading step occurring at the peptidyl transferase center and thus would serve to optimize ribosomal fidelity.</text>
</comment>
<comment type="catalytic activity">
    <reaction evidence="1">
        <text>adenosine(2503) in 23S rRNA + 2 reduced [2Fe-2S]-[ferredoxin] + 2 S-adenosyl-L-methionine = 2-methyladenosine(2503) in 23S rRNA + 5'-deoxyadenosine + L-methionine + 2 oxidized [2Fe-2S]-[ferredoxin] + S-adenosyl-L-homocysteine</text>
        <dbReference type="Rhea" id="RHEA:42916"/>
        <dbReference type="Rhea" id="RHEA-COMP:10000"/>
        <dbReference type="Rhea" id="RHEA-COMP:10001"/>
        <dbReference type="Rhea" id="RHEA-COMP:10152"/>
        <dbReference type="Rhea" id="RHEA-COMP:10282"/>
        <dbReference type="ChEBI" id="CHEBI:17319"/>
        <dbReference type="ChEBI" id="CHEBI:33737"/>
        <dbReference type="ChEBI" id="CHEBI:33738"/>
        <dbReference type="ChEBI" id="CHEBI:57844"/>
        <dbReference type="ChEBI" id="CHEBI:57856"/>
        <dbReference type="ChEBI" id="CHEBI:59789"/>
        <dbReference type="ChEBI" id="CHEBI:74411"/>
        <dbReference type="ChEBI" id="CHEBI:74497"/>
        <dbReference type="EC" id="2.1.1.192"/>
    </reaction>
</comment>
<comment type="catalytic activity">
    <reaction evidence="1">
        <text>adenosine(37) in tRNA + 2 reduced [2Fe-2S]-[ferredoxin] + 2 S-adenosyl-L-methionine = 2-methyladenosine(37) in tRNA + 5'-deoxyadenosine + L-methionine + 2 oxidized [2Fe-2S]-[ferredoxin] + S-adenosyl-L-homocysteine</text>
        <dbReference type="Rhea" id="RHEA:43332"/>
        <dbReference type="Rhea" id="RHEA-COMP:10000"/>
        <dbReference type="Rhea" id="RHEA-COMP:10001"/>
        <dbReference type="Rhea" id="RHEA-COMP:10162"/>
        <dbReference type="Rhea" id="RHEA-COMP:10485"/>
        <dbReference type="ChEBI" id="CHEBI:17319"/>
        <dbReference type="ChEBI" id="CHEBI:33737"/>
        <dbReference type="ChEBI" id="CHEBI:33738"/>
        <dbReference type="ChEBI" id="CHEBI:57844"/>
        <dbReference type="ChEBI" id="CHEBI:57856"/>
        <dbReference type="ChEBI" id="CHEBI:59789"/>
        <dbReference type="ChEBI" id="CHEBI:74411"/>
        <dbReference type="ChEBI" id="CHEBI:74497"/>
        <dbReference type="EC" id="2.1.1.192"/>
    </reaction>
</comment>
<comment type="cofactor">
    <cofactor evidence="1">
        <name>[4Fe-4S] cluster</name>
        <dbReference type="ChEBI" id="CHEBI:49883"/>
    </cofactor>
    <text evidence="1">Binds 1 [4Fe-4S] cluster. The cluster is coordinated with 3 cysteines and an exchangeable S-adenosyl-L-methionine.</text>
</comment>
<comment type="subcellular location">
    <subcellularLocation>
        <location evidence="1">Cytoplasm</location>
    </subcellularLocation>
</comment>
<comment type="miscellaneous">
    <text evidence="1">Reaction proceeds by a ping-pong mechanism involving intermediate methylation of a conserved cysteine residue.</text>
</comment>
<comment type="similarity">
    <text evidence="1">Belongs to the radical SAM superfamily. RlmN family.</text>
</comment>
<evidence type="ECO:0000255" key="1">
    <source>
        <dbReference type="HAMAP-Rule" id="MF_01849"/>
    </source>
</evidence>
<evidence type="ECO:0000255" key="2">
    <source>
        <dbReference type="PROSITE-ProRule" id="PRU01266"/>
    </source>
</evidence>
<keyword id="KW-0004">4Fe-4S</keyword>
<keyword id="KW-0963">Cytoplasm</keyword>
<keyword id="KW-1015">Disulfide bond</keyword>
<keyword id="KW-0408">Iron</keyword>
<keyword id="KW-0411">Iron-sulfur</keyword>
<keyword id="KW-0479">Metal-binding</keyword>
<keyword id="KW-0489">Methyltransferase</keyword>
<keyword id="KW-0698">rRNA processing</keyword>
<keyword id="KW-0949">S-adenosyl-L-methionine</keyword>
<keyword id="KW-0808">Transferase</keyword>
<keyword id="KW-0819">tRNA processing</keyword>
<sequence>MSEQLVTPENVTTKDGKINLLDLNRQQMREFFKDLGEKPFRADQVMKWMYHYCCDNFDEMTDINKVLRGKLKEVAEIRAPEVVEEQRSSDGTIKWAIAVGDQRVETVYIPEDDRATLCVSSQVGCALECKFCSTAQQGFNRNLRVSEIIGQVWRAAKIVGAAKVTGQRPITNVVMMGMGEPLLNLNNVVPAMEIMLDDFGFGLSKRRVTLSTSGVVPALDKLGDMIDVALAISLHAPNDEIRDEIVPINKKYNIETFLAAVRRYLEKSNANQGRVTIEYVMLDHVNDGTEHAHQLAELLKDTPCKINLIPWNPFPGAPYGRSSNSRIDRFSKVLMSYGFTTIVRKTRGDDIDAACGQLAGDVIDRTKRTLRKRMQGEAIDIKAV</sequence>
<name>RLMN_ECOLC</name>
<gene>
    <name evidence="1" type="primary">rlmN</name>
    <name type="ordered locus">EcolC_1160</name>
</gene>
<protein>
    <recommendedName>
        <fullName evidence="1">Dual-specificity RNA methyltransferase RlmN</fullName>
        <ecNumber evidence="1">2.1.1.192</ecNumber>
    </recommendedName>
    <alternativeName>
        <fullName evidence="1">23S rRNA (adenine(2503)-C(2))-methyltransferase</fullName>
    </alternativeName>
    <alternativeName>
        <fullName evidence="1">23S rRNA m2A2503 methyltransferase</fullName>
    </alternativeName>
    <alternativeName>
        <fullName evidence="1">Ribosomal RNA large subunit methyltransferase N</fullName>
    </alternativeName>
    <alternativeName>
        <fullName evidence="1">tRNA (adenine(37)-C(2))-methyltransferase</fullName>
    </alternativeName>
    <alternativeName>
        <fullName evidence="1">tRNA m2A37 methyltransferase</fullName>
    </alternativeName>
</protein>
<organism>
    <name type="scientific">Escherichia coli (strain ATCC 8739 / DSM 1576 / NBRC 3972 / NCIMB 8545 / WDCM 00012 / Crooks)</name>
    <dbReference type="NCBI Taxonomy" id="481805"/>
    <lineage>
        <taxon>Bacteria</taxon>
        <taxon>Pseudomonadati</taxon>
        <taxon>Pseudomonadota</taxon>
        <taxon>Gammaproteobacteria</taxon>
        <taxon>Enterobacterales</taxon>
        <taxon>Enterobacteriaceae</taxon>
        <taxon>Escherichia</taxon>
    </lineage>
</organism>
<reference key="1">
    <citation type="submission" date="2008-02" db="EMBL/GenBank/DDBJ databases">
        <title>Complete sequence of Escherichia coli C str. ATCC 8739.</title>
        <authorList>
            <person name="Copeland A."/>
            <person name="Lucas S."/>
            <person name="Lapidus A."/>
            <person name="Glavina del Rio T."/>
            <person name="Dalin E."/>
            <person name="Tice H."/>
            <person name="Bruce D."/>
            <person name="Goodwin L."/>
            <person name="Pitluck S."/>
            <person name="Kiss H."/>
            <person name="Brettin T."/>
            <person name="Detter J.C."/>
            <person name="Han C."/>
            <person name="Kuske C.R."/>
            <person name="Schmutz J."/>
            <person name="Larimer F."/>
            <person name="Land M."/>
            <person name="Hauser L."/>
            <person name="Kyrpides N."/>
            <person name="Mikhailova N."/>
            <person name="Ingram L."/>
            <person name="Richardson P."/>
        </authorList>
    </citation>
    <scope>NUCLEOTIDE SEQUENCE [LARGE SCALE GENOMIC DNA]</scope>
    <source>
        <strain>ATCC 8739 / DSM 1576 / NBRC 3972 / NCIMB 8545 / WDCM 00012 / Crooks</strain>
    </source>
</reference>
<dbReference type="EC" id="2.1.1.192" evidence="1"/>
<dbReference type="EMBL" id="CP000946">
    <property type="protein sequence ID" value="ACA76827.1"/>
    <property type="molecule type" value="Genomic_DNA"/>
</dbReference>
<dbReference type="RefSeq" id="WP_000003317.1">
    <property type="nucleotide sequence ID" value="NZ_MTFT01000002.1"/>
</dbReference>
<dbReference type="SMR" id="B1IWE4"/>
<dbReference type="KEGG" id="ecl:EcolC_1160"/>
<dbReference type="HOGENOM" id="CLU_029101_0_0_6"/>
<dbReference type="GO" id="GO:0005737">
    <property type="term" value="C:cytoplasm"/>
    <property type="evidence" value="ECO:0007669"/>
    <property type="project" value="UniProtKB-SubCell"/>
</dbReference>
<dbReference type="GO" id="GO:0051539">
    <property type="term" value="F:4 iron, 4 sulfur cluster binding"/>
    <property type="evidence" value="ECO:0007669"/>
    <property type="project" value="UniProtKB-UniRule"/>
</dbReference>
<dbReference type="GO" id="GO:0046872">
    <property type="term" value="F:metal ion binding"/>
    <property type="evidence" value="ECO:0007669"/>
    <property type="project" value="UniProtKB-KW"/>
</dbReference>
<dbReference type="GO" id="GO:0070040">
    <property type="term" value="F:rRNA (adenine(2503)-C2-)-methyltransferase activity"/>
    <property type="evidence" value="ECO:0007669"/>
    <property type="project" value="UniProtKB-UniRule"/>
</dbReference>
<dbReference type="GO" id="GO:0019843">
    <property type="term" value="F:rRNA binding"/>
    <property type="evidence" value="ECO:0007669"/>
    <property type="project" value="UniProtKB-UniRule"/>
</dbReference>
<dbReference type="GO" id="GO:0002935">
    <property type="term" value="F:tRNA (adenine(37)-C2)-methyltransferase activity"/>
    <property type="evidence" value="ECO:0007669"/>
    <property type="project" value="UniProtKB-UniRule"/>
</dbReference>
<dbReference type="GO" id="GO:0000049">
    <property type="term" value="F:tRNA binding"/>
    <property type="evidence" value="ECO:0007669"/>
    <property type="project" value="UniProtKB-UniRule"/>
</dbReference>
<dbReference type="GO" id="GO:0070475">
    <property type="term" value="P:rRNA base methylation"/>
    <property type="evidence" value="ECO:0007669"/>
    <property type="project" value="UniProtKB-UniRule"/>
</dbReference>
<dbReference type="GO" id="GO:0030488">
    <property type="term" value="P:tRNA methylation"/>
    <property type="evidence" value="ECO:0007669"/>
    <property type="project" value="UniProtKB-UniRule"/>
</dbReference>
<dbReference type="CDD" id="cd01335">
    <property type="entry name" value="Radical_SAM"/>
    <property type="match status" value="1"/>
</dbReference>
<dbReference type="FunFam" id="1.10.150.530:FF:000001">
    <property type="entry name" value="Dual-specificity RNA methyltransferase RlmN"/>
    <property type="match status" value="1"/>
</dbReference>
<dbReference type="FunFam" id="3.20.20.70:FF:000008">
    <property type="entry name" value="Dual-specificity RNA methyltransferase RlmN"/>
    <property type="match status" value="1"/>
</dbReference>
<dbReference type="Gene3D" id="1.10.150.530">
    <property type="match status" value="1"/>
</dbReference>
<dbReference type="Gene3D" id="3.20.20.70">
    <property type="entry name" value="Aldolase class I"/>
    <property type="match status" value="1"/>
</dbReference>
<dbReference type="HAMAP" id="MF_01849">
    <property type="entry name" value="RNA_methyltr_RlmN"/>
    <property type="match status" value="1"/>
</dbReference>
<dbReference type="InterPro" id="IPR013785">
    <property type="entry name" value="Aldolase_TIM"/>
</dbReference>
<dbReference type="InterPro" id="IPR040072">
    <property type="entry name" value="Methyltransferase_A"/>
</dbReference>
<dbReference type="InterPro" id="IPR048641">
    <property type="entry name" value="RlmN_N"/>
</dbReference>
<dbReference type="InterPro" id="IPR027492">
    <property type="entry name" value="RNA_MTrfase_RlmN"/>
</dbReference>
<dbReference type="InterPro" id="IPR004383">
    <property type="entry name" value="rRNA_lsu_MTrfase_RlmN/Cfr"/>
</dbReference>
<dbReference type="InterPro" id="IPR007197">
    <property type="entry name" value="rSAM"/>
</dbReference>
<dbReference type="NCBIfam" id="NF008396">
    <property type="entry name" value="PRK11194.1"/>
    <property type="match status" value="1"/>
</dbReference>
<dbReference type="NCBIfam" id="TIGR00048">
    <property type="entry name" value="rRNA_mod_RlmN"/>
    <property type="match status" value="1"/>
</dbReference>
<dbReference type="PANTHER" id="PTHR30544">
    <property type="entry name" value="23S RRNA METHYLTRANSFERASE"/>
    <property type="match status" value="1"/>
</dbReference>
<dbReference type="PANTHER" id="PTHR30544:SF5">
    <property type="entry name" value="RADICAL SAM CORE DOMAIN-CONTAINING PROTEIN"/>
    <property type="match status" value="1"/>
</dbReference>
<dbReference type="Pfam" id="PF04055">
    <property type="entry name" value="Radical_SAM"/>
    <property type="match status" value="1"/>
</dbReference>
<dbReference type="Pfam" id="PF21016">
    <property type="entry name" value="RlmN_N"/>
    <property type="match status" value="1"/>
</dbReference>
<dbReference type="PIRSF" id="PIRSF006004">
    <property type="entry name" value="CHP00048"/>
    <property type="match status" value="1"/>
</dbReference>
<dbReference type="SFLD" id="SFLDF00275">
    <property type="entry name" value="adenosine_C2_methyltransferase"/>
    <property type="match status" value="1"/>
</dbReference>
<dbReference type="SFLD" id="SFLDG01062">
    <property type="entry name" value="methyltransferase_(Class_A)"/>
    <property type="match status" value="1"/>
</dbReference>
<dbReference type="SUPFAM" id="SSF102114">
    <property type="entry name" value="Radical SAM enzymes"/>
    <property type="match status" value="1"/>
</dbReference>
<dbReference type="PROSITE" id="PS51918">
    <property type="entry name" value="RADICAL_SAM"/>
    <property type="match status" value="1"/>
</dbReference>